<comment type="function">
    <text evidence="1">Catalyzes the reversible cleavage of pseudouridine 5'-phosphate (PsiMP) to ribose 5-phosphate and uracil. Functions biologically in the cleavage direction, as part of a pseudouridine degradation pathway.</text>
</comment>
<comment type="catalytic activity">
    <reaction evidence="1">
        <text>D-ribose 5-phosphate + uracil = psi-UMP + H2O</text>
        <dbReference type="Rhea" id="RHEA:18337"/>
        <dbReference type="ChEBI" id="CHEBI:15377"/>
        <dbReference type="ChEBI" id="CHEBI:17568"/>
        <dbReference type="ChEBI" id="CHEBI:58380"/>
        <dbReference type="ChEBI" id="CHEBI:78346"/>
        <dbReference type="EC" id="4.2.1.70"/>
    </reaction>
</comment>
<comment type="cofactor">
    <cofactor evidence="1">
        <name>Mn(2+)</name>
        <dbReference type="ChEBI" id="CHEBI:29035"/>
    </cofactor>
    <text evidence="1">Binds 1 Mn(2+) ion per subunit.</text>
</comment>
<comment type="subunit">
    <text evidence="1">Homotrimer.</text>
</comment>
<comment type="similarity">
    <text evidence="1">Belongs to the pseudouridine-5'-phosphate glycosidase family.</text>
</comment>
<keyword id="KW-0326">Glycosidase</keyword>
<keyword id="KW-0378">Hydrolase</keyword>
<keyword id="KW-0456">Lyase</keyword>
<keyword id="KW-0464">Manganese</keyword>
<keyword id="KW-0479">Metal-binding</keyword>
<keyword id="KW-1185">Reference proteome</keyword>
<dbReference type="EC" id="4.2.1.70" evidence="1"/>
<dbReference type="EMBL" id="CP000830">
    <property type="protein sequence ID" value="ABV93847.1"/>
    <property type="molecule type" value="Genomic_DNA"/>
</dbReference>
<dbReference type="RefSeq" id="WP_012178778.1">
    <property type="nucleotide sequence ID" value="NC_009952.1"/>
</dbReference>
<dbReference type="SMR" id="A8LQI0"/>
<dbReference type="STRING" id="398580.Dshi_2110"/>
<dbReference type="KEGG" id="dsh:Dshi_2110"/>
<dbReference type="eggNOG" id="COG2313">
    <property type="taxonomic scope" value="Bacteria"/>
</dbReference>
<dbReference type="HOGENOM" id="CLU_012201_0_1_5"/>
<dbReference type="OrthoDB" id="9805870at2"/>
<dbReference type="Proteomes" id="UP000006833">
    <property type="component" value="Chromosome"/>
</dbReference>
<dbReference type="GO" id="GO:0005737">
    <property type="term" value="C:cytoplasm"/>
    <property type="evidence" value="ECO:0007669"/>
    <property type="project" value="TreeGrafter"/>
</dbReference>
<dbReference type="GO" id="GO:0016798">
    <property type="term" value="F:hydrolase activity, acting on glycosyl bonds"/>
    <property type="evidence" value="ECO:0007669"/>
    <property type="project" value="UniProtKB-KW"/>
</dbReference>
<dbReference type="GO" id="GO:0046872">
    <property type="term" value="F:metal ion binding"/>
    <property type="evidence" value="ECO:0007669"/>
    <property type="project" value="UniProtKB-KW"/>
</dbReference>
<dbReference type="GO" id="GO:0004730">
    <property type="term" value="F:pseudouridylate synthase activity"/>
    <property type="evidence" value="ECO:0007669"/>
    <property type="project" value="UniProtKB-UniRule"/>
</dbReference>
<dbReference type="GO" id="GO:0046113">
    <property type="term" value="P:nucleobase catabolic process"/>
    <property type="evidence" value="ECO:0007669"/>
    <property type="project" value="UniProtKB-UniRule"/>
</dbReference>
<dbReference type="Gene3D" id="3.40.1790.10">
    <property type="entry name" value="Indigoidine synthase domain"/>
    <property type="match status" value="1"/>
</dbReference>
<dbReference type="HAMAP" id="MF_01876">
    <property type="entry name" value="PsiMP_glycosidase"/>
    <property type="match status" value="1"/>
</dbReference>
<dbReference type="InterPro" id="IPR022830">
    <property type="entry name" value="Indigdn_synthA-like"/>
</dbReference>
<dbReference type="InterPro" id="IPR007342">
    <property type="entry name" value="PsuG"/>
</dbReference>
<dbReference type="PANTHER" id="PTHR42909:SF1">
    <property type="entry name" value="CARBOHYDRATE KINASE PFKB DOMAIN-CONTAINING PROTEIN"/>
    <property type="match status" value="1"/>
</dbReference>
<dbReference type="PANTHER" id="PTHR42909">
    <property type="entry name" value="ZGC:136858"/>
    <property type="match status" value="1"/>
</dbReference>
<dbReference type="Pfam" id="PF04227">
    <property type="entry name" value="Indigoidine_A"/>
    <property type="match status" value="1"/>
</dbReference>
<dbReference type="SUPFAM" id="SSF110581">
    <property type="entry name" value="Indigoidine synthase A-like"/>
    <property type="match status" value="1"/>
</dbReference>
<organism>
    <name type="scientific">Dinoroseobacter shibae (strain DSM 16493 / NCIMB 14021 / DFL 12)</name>
    <dbReference type="NCBI Taxonomy" id="398580"/>
    <lineage>
        <taxon>Bacteria</taxon>
        <taxon>Pseudomonadati</taxon>
        <taxon>Pseudomonadota</taxon>
        <taxon>Alphaproteobacteria</taxon>
        <taxon>Rhodobacterales</taxon>
        <taxon>Roseobacteraceae</taxon>
        <taxon>Dinoroseobacter</taxon>
    </lineage>
</organism>
<evidence type="ECO:0000255" key="1">
    <source>
        <dbReference type="HAMAP-Rule" id="MF_01876"/>
    </source>
</evidence>
<name>PSUG_DINSH</name>
<reference key="1">
    <citation type="journal article" date="2010" name="ISME J.">
        <title>The complete genome sequence of the algal symbiont Dinoroseobacter shibae: a hitchhiker's guide to life in the sea.</title>
        <authorList>
            <person name="Wagner-Dobler I."/>
            <person name="Ballhausen B."/>
            <person name="Berger M."/>
            <person name="Brinkhoff T."/>
            <person name="Buchholz I."/>
            <person name="Bunk B."/>
            <person name="Cypionka H."/>
            <person name="Daniel R."/>
            <person name="Drepper T."/>
            <person name="Gerdts G."/>
            <person name="Hahnke S."/>
            <person name="Han C."/>
            <person name="Jahn D."/>
            <person name="Kalhoefer D."/>
            <person name="Kiss H."/>
            <person name="Klenk H.P."/>
            <person name="Kyrpides N."/>
            <person name="Liebl W."/>
            <person name="Liesegang H."/>
            <person name="Meincke L."/>
            <person name="Pati A."/>
            <person name="Petersen J."/>
            <person name="Piekarski T."/>
            <person name="Pommerenke C."/>
            <person name="Pradella S."/>
            <person name="Pukall R."/>
            <person name="Rabus R."/>
            <person name="Stackebrandt E."/>
            <person name="Thole S."/>
            <person name="Thompson L."/>
            <person name="Tielen P."/>
            <person name="Tomasch J."/>
            <person name="von Jan M."/>
            <person name="Wanphrut N."/>
            <person name="Wichels A."/>
            <person name="Zech H."/>
            <person name="Simon M."/>
        </authorList>
    </citation>
    <scope>NUCLEOTIDE SEQUENCE [LARGE SCALE GENOMIC DNA]</scope>
    <source>
        <strain>DSM 16493 / NCIMB 14021 / DFL 12</strain>
    </source>
</reference>
<gene>
    <name evidence="1" type="primary">psuG</name>
    <name type="ordered locus">Dshi_2110</name>
</gene>
<sequence>MTHLPSFVDVHADVRNALETNAPVVALESTIITHGMPFPDNVEMAKAVEEEIRARGAIPATIAVLDGVLKIGLGADELEALAKVKDALKISRADIGYAISQGKSAGTTVAATMIVAQMAGIRVFATGGIGGVHKGVETSFDISADLTELGRTDVIVVAAGAKAILDVPKTLEVLETQGVSVVGYRTDTLPAFWTSGSDLDIPLRLDSAAEISEFQKVRDALRLGGGMLVANPIPAGDEIPAEIINGYIATAQAEMAAQSISGKAVTPFLLQRIFELSEGRSLRSNIALVKNNARLAADIAVALHS</sequence>
<proteinExistence type="inferred from homology"/>
<protein>
    <recommendedName>
        <fullName evidence="1">Pseudouridine-5'-phosphate glycosidase</fullName>
        <shortName evidence="1">PsiMP glycosidase</shortName>
        <ecNumber evidence="1">4.2.1.70</ecNumber>
    </recommendedName>
</protein>
<accession>A8LQI0</accession>
<feature type="chain" id="PRO_0000390517" description="Pseudouridine-5'-phosphate glycosidase">
    <location>
        <begin position="1"/>
        <end position="305"/>
    </location>
</feature>
<feature type="active site" description="Proton donor" evidence="1">
    <location>
        <position position="28"/>
    </location>
</feature>
<feature type="active site" description="Nucleophile" evidence="1">
    <location>
        <position position="162"/>
    </location>
</feature>
<feature type="binding site" evidence="1">
    <location>
        <position position="89"/>
    </location>
    <ligand>
        <name>substrate</name>
    </ligand>
</feature>
<feature type="binding site" evidence="1">
    <location>
        <position position="109"/>
    </location>
    <ligand>
        <name>substrate</name>
    </ligand>
</feature>
<feature type="binding site" evidence="1">
    <location>
        <position position="141"/>
    </location>
    <ligand>
        <name>Mn(2+)</name>
        <dbReference type="ChEBI" id="CHEBI:29035"/>
    </ligand>
</feature>
<feature type="binding site" evidence="1">
    <location>
        <begin position="143"/>
        <end position="145"/>
    </location>
    <ligand>
        <name>substrate</name>
    </ligand>
</feature>